<protein>
    <recommendedName>
        <fullName>GPALPP motifs-containing protein 1</fullName>
    </recommendedName>
</protein>
<reference key="1">
    <citation type="submission" date="2005-08" db="EMBL/GenBank/DDBJ databases">
        <authorList>
            <consortium name="NIH - Mammalian Gene Collection (MGC) project"/>
        </authorList>
    </citation>
    <scope>NUCLEOTIDE SEQUENCE [LARGE SCALE MRNA]</scope>
    <source>
        <strain>Hereford</strain>
        <tissue>Hypothalamus</tissue>
    </source>
</reference>
<evidence type="ECO:0000250" key="1">
    <source>
        <dbReference type="UniProtKB" id="Q4V893"/>
    </source>
</evidence>
<evidence type="ECO:0000250" key="2">
    <source>
        <dbReference type="UniProtKB" id="Q8IXQ4"/>
    </source>
</evidence>
<evidence type="ECO:0000256" key="3">
    <source>
        <dbReference type="SAM" id="MobiDB-lite"/>
    </source>
</evidence>
<dbReference type="EMBL" id="BC103212">
    <property type="protein sequence ID" value="AAI03213.1"/>
    <property type="molecule type" value="mRNA"/>
</dbReference>
<dbReference type="RefSeq" id="NP_001029752.1">
    <property type="nucleotide sequence ID" value="NM_001034580.1"/>
</dbReference>
<dbReference type="SMR" id="Q3ZBM6"/>
<dbReference type="FunCoup" id="Q3ZBM6">
    <property type="interactions" value="170"/>
</dbReference>
<dbReference type="STRING" id="9913.ENSBTAP00000056856"/>
<dbReference type="iPTMnet" id="Q3ZBM6"/>
<dbReference type="PaxDb" id="9913-ENSBTAP00000046105"/>
<dbReference type="GeneID" id="532698"/>
<dbReference type="KEGG" id="bta:532698"/>
<dbReference type="CTD" id="55425"/>
<dbReference type="eggNOG" id="KOG4188">
    <property type="taxonomic scope" value="Eukaryota"/>
</dbReference>
<dbReference type="HOGENOM" id="CLU_029231_1_0_1"/>
<dbReference type="InParanoid" id="Q3ZBM6"/>
<dbReference type="OrthoDB" id="73491at2759"/>
<dbReference type="Proteomes" id="UP000009136">
    <property type="component" value="Unplaced"/>
</dbReference>
<dbReference type="InterPro" id="IPR022226">
    <property type="entry name" value="DUF3752"/>
</dbReference>
<dbReference type="InterPro" id="IPR046331">
    <property type="entry name" value="GPAM1-like"/>
</dbReference>
<dbReference type="PANTHER" id="PTHR46370">
    <property type="entry name" value="GPALPP MOTIFS-CONTAINING PROTEIN 1"/>
    <property type="match status" value="1"/>
</dbReference>
<dbReference type="PANTHER" id="PTHR46370:SF1">
    <property type="entry name" value="GPALPP MOTIFS-CONTAINING PROTEIN 1"/>
    <property type="match status" value="1"/>
</dbReference>
<dbReference type="Pfam" id="PF12572">
    <property type="entry name" value="DUF3752"/>
    <property type="match status" value="1"/>
</dbReference>
<organism>
    <name type="scientific">Bos taurus</name>
    <name type="common">Bovine</name>
    <dbReference type="NCBI Taxonomy" id="9913"/>
    <lineage>
        <taxon>Eukaryota</taxon>
        <taxon>Metazoa</taxon>
        <taxon>Chordata</taxon>
        <taxon>Craniata</taxon>
        <taxon>Vertebrata</taxon>
        <taxon>Euteleostomi</taxon>
        <taxon>Mammalia</taxon>
        <taxon>Eutheria</taxon>
        <taxon>Laurasiatheria</taxon>
        <taxon>Artiodactyla</taxon>
        <taxon>Ruminantia</taxon>
        <taxon>Pecora</taxon>
        <taxon>Bovidae</taxon>
        <taxon>Bovinae</taxon>
        <taxon>Bos</taxon>
    </lineage>
</organism>
<sequence length="277" mass="30223">MARDLIGPALPPGFKAGGSAEDEERDSSPVAGPALPPNYKSSSSESSDSDEDSSSLSEEGNQESEEDDTGPPARKLRRNQDDDDDDDDEGFFGPALPPGFKKQDDSPPRPMIGPALPPGFLKSTQKSDEGRSDPGQVSSDFNSEKETDSSEEEDIVGPMPAKGPVNSSVTAEFEKRAQRMKEKLTKGDDDSSKPITRESWMTELPPEMKDFGLGPRTFKRRADGKSGDRSVWTDTPADRERKAKVRGLVCSCISVHVGSILKKNRRQNYSRVLFLSL</sequence>
<name>GPAM1_BOVIN</name>
<keyword id="KW-0007">Acetylation</keyword>
<keyword id="KW-0597">Phosphoprotein</keyword>
<keyword id="KW-1185">Reference proteome</keyword>
<accession>Q3ZBM6</accession>
<gene>
    <name type="primary">GPALPP1</name>
</gene>
<proteinExistence type="evidence at transcript level"/>
<feature type="initiator methionine" description="Removed" evidence="2">
    <location>
        <position position="1"/>
    </location>
</feature>
<feature type="chain" id="PRO_0000293713" description="GPALPP motifs-containing protein 1">
    <location>
        <begin position="2"/>
        <end position="277"/>
    </location>
</feature>
<feature type="region of interest" description="Disordered" evidence="3">
    <location>
        <begin position="1"/>
        <end position="240"/>
    </location>
</feature>
<feature type="short sequence motif" description="GPALPP motif 1">
    <location>
        <begin position="7"/>
        <end position="12"/>
    </location>
</feature>
<feature type="short sequence motif" description="GPALPP motif 2">
    <location>
        <begin position="32"/>
        <end position="37"/>
    </location>
</feature>
<feature type="short sequence motif" description="GPALPP motif 3">
    <location>
        <begin position="93"/>
        <end position="98"/>
    </location>
</feature>
<feature type="short sequence motif" description="GPALPP motif 4">
    <location>
        <begin position="113"/>
        <end position="118"/>
    </location>
</feature>
<feature type="compositionally biased region" description="Acidic residues" evidence="3">
    <location>
        <begin position="60"/>
        <end position="69"/>
    </location>
</feature>
<feature type="compositionally biased region" description="Acidic residues" evidence="3">
    <location>
        <begin position="81"/>
        <end position="90"/>
    </location>
</feature>
<feature type="compositionally biased region" description="Pro residues" evidence="3">
    <location>
        <begin position="108"/>
        <end position="117"/>
    </location>
</feature>
<feature type="compositionally biased region" description="Basic and acidic residues" evidence="3">
    <location>
        <begin position="172"/>
        <end position="196"/>
    </location>
</feature>
<feature type="modified residue" description="N-acetylalanine" evidence="2">
    <location>
        <position position="2"/>
    </location>
</feature>
<feature type="modified residue" description="Phosphoserine" evidence="2">
    <location>
        <position position="28"/>
    </location>
</feature>
<feature type="modified residue" description="Phosphoserine" evidence="2">
    <location>
        <position position="106"/>
    </location>
</feature>
<feature type="modified residue" description="Phosphoserine" evidence="1">
    <location>
        <position position="138"/>
    </location>
</feature>
<feature type="modified residue" description="Phosphoserine" evidence="1">
    <location>
        <position position="143"/>
    </location>
</feature>
<feature type="modified residue" description="Phosphothreonine" evidence="2">
    <location>
        <position position="147"/>
    </location>
</feature>
<feature type="modified residue" description="Phosphoserine" evidence="2">
    <location>
        <position position="149"/>
    </location>
</feature>
<feature type="modified residue" description="Phosphoserine" evidence="2">
    <location>
        <position position="150"/>
    </location>
</feature>